<proteinExistence type="inferred from homology"/>
<accession>P57122</accession>
<keyword id="KW-0066">ATP synthesis</keyword>
<keyword id="KW-0067">ATP-binding</keyword>
<keyword id="KW-1003">Cell membrane</keyword>
<keyword id="KW-0139">CF(1)</keyword>
<keyword id="KW-0375">Hydrogen ion transport</keyword>
<keyword id="KW-0406">Ion transport</keyword>
<keyword id="KW-0472">Membrane</keyword>
<keyword id="KW-0547">Nucleotide-binding</keyword>
<keyword id="KW-1185">Reference proteome</keyword>
<keyword id="KW-1278">Translocase</keyword>
<keyword id="KW-0813">Transport</keyword>
<comment type="function">
    <text evidence="1">Produces ATP from ADP in the presence of a proton gradient across the membrane. The alpha chain is a regulatory subunit.</text>
</comment>
<comment type="catalytic activity">
    <reaction evidence="1">
        <text>ATP + H2O + 4 H(+)(in) = ADP + phosphate + 5 H(+)(out)</text>
        <dbReference type="Rhea" id="RHEA:57720"/>
        <dbReference type="ChEBI" id="CHEBI:15377"/>
        <dbReference type="ChEBI" id="CHEBI:15378"/>
        <dbReference type="ChEBI" id="CHEBI:30616"/>
        <dbReference type="ChEBI" id="CHEBI:43474"/>
        <dbReference type="ChEBI" id="CHEBI:456216"/>
        <dbReference type="EC" id="7.1.2.2"/>
    </reaction>
</comment>
<comment type="subunit">
    <text evidence="1">F-type ATPases have 2 components, CF(1) - the catalytic core - and CF(0) - the membrane proton channel. CF(1) has five subunits: alpha(3), beta(3), gamma(1), delta(1), epsilon(1). CF(0) has three main subunits: a(1), b(2) and c(9-12). The alpha and beta chains form an alternating ring which encloses part of the gamma chain. CF(1) is attached to CF(0) by a central stalk formed by the gamma and epsilon chains, while a peripheral stalk is formed by the delta and b chains.</text>
</comment>
<comment type="subcellular location">
    <subcellularLocation>
        <location evidence="1">Cell membrane</location>
        <topology evidence="1">Peripheral membrane protein</topology>
    </subcellularLocation>
</comment>
<comment type="similarity">
    <text evidence="1">Belongs to the ATPase alpha/beta chains family.</text>
</comment>
<gene>
    <name evidence="1" type="primary">atpA</name>
    <name type="ordered locus">BU006</name>
</gene>
<protein>
    <recommendedName>
        <fullName evidence="1">ATP synthase subunit alpha</fullName>
        <ecNumber evidence="1">7.1.2.2</ecNumber>
    </recommendedName>
    <alternativeName>
        <fullName evidence="1">ATP synthase F1 sector subunit alpha</fullName>
    </alternativeName>
    <alternativeName>
        <fullName evidence="1">F-ATPase subunit alpha</fullName>
    </alternativeName>
</protein>
<feature type="chain" id="PRO_0000144320" description="ATP synthase subunit alpha">
    <location>
        <begin position="1"/>
        <end position="512"/>
    </location>
</feature>
<feature type="binding site" evidence="1">
    <location>
        <begin position="169"/>
        <end position="176"/>
    </location>
    <ligand>
        <name>ATP</name>
        <dbReference type="ChEBI" id="CHEBI:30616"/>
    </ligand>
</feature>
<feature type="site" description="Required for activity">
    <location>
        <position position="373"/>
    </location>
</feature>
<reference key="1">
    <citation type="journal article" date="2000" name="Nature">
        <title>Genome sequence of the endocellular bacterial symbiont of aphids Buchnera sp. APS.</title>
        <authorList>
            <person name="Shigenobu S."/>
            <person name="Watanabe H."/>
            <person name="Hattori M."/>
            <person name="Sakaki Y."/>
            <person name="Ishikawa H."/>
        </authorList>
    </citation>
    <scope>NUCLEOTIDE SEQUENCE [LARGE SCALE GENOMIC DNA]</scope>
    <source>
        <strain>APS</strain>
    </source>
</reference>
<organism>
    <name type="scientific">Buchnera aphidicola subsp. Acyrthosiphon pisum (strain APS)</name>
    <name type="common">Acyrthosiphon pisum symbiotic bacterium</name>
    <dbReference type="NCBI Taxonomy" id="107806"/>
    <lineage>
        <taxon>Bacteria</taxon>
        <taxon>Pseudomonadati</taxon>
        <taxon>Pseudomonadota</taxon>
        <taxon>Gammaproteobacteria</taxon>
        <taxon>Enterobacterales</taxon>
        <taxon>Erwiniaceae</taxon>
        <taxon>Buchnera</taxon>
    </lineage>
</organism>
<dbReference type="EC" id="7.1.2.2" evidence="1"/>
<dbReference type="EMBL" id="BA000003">
    <property type="protein sequence ID" value="BAB12734.1"/>
    <property type="molecule type" value="Genomic_DNA"/>
</dbReference>
<dbReference type="RefSeq" id="NP_239848.1">
    <property type="nucleotide sequence ID" value="NC_002528.1"/>
</dbReference>
<dbReference type="RefSeq" id="WP_009873968.1">
    <property type="nucleotide sequence ID" value="NC_002528.1"/>
</dbReference>
<dbReference type="SMR" id="P57122"/>
<dbReference type="STRING" id="563178.BUAP5A_006"/>
<dbReference type="EnsemblBacteria" id="BAB12734">
    <property type="protein sequence ID" value="BAB12734"/>
    <property type="gene ID" value="BAB12734"/>
</dbReference>
<dbReference type="KEGG" id="buc:BU006"/>
<dbReference type="PATRIC" id="fig|107806.10.peg.19"/>
<dbReference type="eggNOG" id="COG0056">
    <property type="taxonomic scope" value="Bacteria"/>
</dbReference>
<dbReference type="HOGENOM" id="CLU_010091_2_1_6"/>
<dbReference type="Proteomes" id="UP000001806">
    <property type="component" value="Chromosome"/>
</dbReference>
<dbReference type="GO" id="GO:0005886">
    <property type="term" value="C:plasma membrane"/>
    <property type="evidence" value="ECO:0007669"/>
    <property type="project" value="UniProtKB-SubCell"/>
</dbReference>
<dbReference type="GO" id="GO:0045259">
    <property type="term" value="C:proton-transporting ATP synthase complex"/>
    <property type="evidence" value="ECO:0007669"/>
    <property type="project" value="UniProtKB-KW"/>
</dbReference>
<dbReference type="GO" id="GO:0043531">
    <property type="term" value="F:ADP binding"/>
    <property type="evidence" value="ECO:0007669"/>
    <property type="project" value="TreeGrafter"/>
</dbReference>
<dbReference type="GO" id="GO:0005524">
    <property type="term" value="F:ATP binding"/>
    <property type="evidence" value="ECO:0007669"/>
    <property type="project" value="UniProtKB-UniRule"/>
</dbReference>
<dbReference type="GO" id="GO:0046933">
    <property type="term" value="F:proton-transporting ATP synthase activity, rotational mechanism"/>
    <property type="evidence" value="ECO:0007669"/>
    <property type="project" value="UniProtKB-UniRule"/>
</dbReference>
<dbReference type="CDD" id="cd18113">
    <property type="entry name" value="ATP-synt_F1_alpha_C"/>
    <property type="match status" value="1"/>
</dbReference>
<dbReference type="CDD" id="cd18116">
    <property type="entry name" value="ATP-synt_F1_alpha_N"/>
    <property type="match status" value="1"/>
</dbReference>
<dbReference type="CDD" id="cd01132">
    <property type="entry name" value="F1-ATPase_alpha_CD"/>
    <property type="match status" value="1"/>
</dbReference>
<dbReference type="FunFam" id="1.20.150.20:FF:000001">
    <property type="entry name" value="ATP synthase subunit alpha"/>
    <property type="match status" value="1"/>
</dbReference>
<dbReference type="FunFam" id="2.40.30.20:FF:000001">
    <property type="entry name" value="ATP synthase subunit alpha"/>
    <property type="match status" value="1"/>
</dbReference>
<dbReference type="FunFam" id="3.40.50.300:FF:000002">
    <property type="entry name" value="ATP synthase subunit alpha"/>
    <property type="match status" value="1"/>
</dbReference>
<dbReference type="Gene3D" id="2.40.30.20">
    <property type="match status" value="1"/>
</dbReference>
<dbReference type="Gene3D" id="1.20.150.20">
    <property type="entry name" value="ATP synthase alpha/beta chain, C-terminal domain"/>
    <property type="match status" value="1"/>
</dbReference>
<dbReference type="Gene3D" id="3.40.50.300">
    <property type="entry name" value="P-loop containing nucleotide triphosphate hydrolases"/>
    <property type="match status" value="1"/>
</dbReference>
<dbReference type="HAMAP" id="MF_01346">
    <property type="entry name" value="ATP_synth_alpha_bact"/>
    <property type="match status" value="1"/>
</dbReference>
<dbReference type="InterPro" id="IPR023366">
    <property type="entry name" value="ATP_synth_asu-like_sf"/>
</dbReference>
<dbReference type="InterPro" id="IPR000793">
    <property type="entry name" value="ATP_synth_asu_C"/>
</dbReference>
<dbReference type="InterPro" id="IPR038376">
    <property type="entry name" value="ATP_synth_asu_C_sf"/>
</dbReference>
<dbReference type="InterPro" id="IPR033732">
    <property type="entry name" value="ATP_synth_F1_a_nt-bd_dom"/>
</dbReference>
<dbReference type="InterPro" id="IPR005294">
    <property type="entry name" value="ATP_synth_F1_asu"/>
</dbReference>
<dbReference type="InterPro" id="IPR020003">
    <property type="entry name" value="ATPase_a/bsu_AS"/>
</dbReference>
<dbReference type="InterPro" id="IPR004100">
    <property type="entry name" value="ATPase_F1/V1/A1_a/bsu_N"/>
</dbReference>
<dbReference type="InterPro" id="IPR036121">
    <property type="entry name" value="ATPase_F1/V1/A1_a/bsu_N_sf"/>
</dbReference>
<dbReference type="InterPro" id="IPR000194">
    <property type="entry name" value="ATPase_F1/V1/A1_a/bsu_nucl-bd"/>
</dbReference>
<dbReference type="InterPro" id="IPR027417">
    <property type="entry name" value="P-loop_NTPase"/>
</dbReference>
<dbReference type="NCBIfam" id="TIGR00962">
    <property type="entry name" value="atpA"/>
    <property type="match status" value="1"/>
</dbReference>
<dbReference type="NCBIfam" id="NF009884">
    <property type="entry name" value="PRK13343.1"/>
    <property type="match status" value="1"/>
</dbReference>
<dbReference type="PANTHER" id="PTHR48082">
    <property type="entry name" value="ATP SYNTHASE SUBUNIT ALPHA, MITOCHONDRIAL"/>
    <property type="match status" value="1"/>
</dbReference>
<dbReference type="PANTHER" id="PTHR48082:SF2">
    <property type="entry name" value="ATP SYNTHASE SUBUNIT ALPHA, MITOCHONDRIAL"/>
    <property type="match status" value="1"/>
</dbReference>
<dbReference type="Pfam" id="PF00006">
    <property type="entry name" value="ATP-synt_ab"/>
    <property type="match status" value="1"/>
</dbReference>
<dbReference type="Pfam" id="PF00306">
    <property type="entry name" value="ATP-synt_ab_C"/>
    <property type="match status" value="1"/>
</dbReference>
<dbReference type="Pfam" id="PF02874">
    <property type="entry name" value="ATP-synt_ab_N"/>
    <property type="match status" value="1"/>
</dbReference>
<dbReference type="SUPFAM" id="SSF47917">
    <property type="entry name" value="C-terminal domain of alpha and beta subunits of F1 ATP synthase"/>
    <property type="match status" value="1"/>
</dbReference>
<dbReference type="SUPFAM" id="SSF50615">
    <property type="entry name" value="N-terminal domain of alpha and beta subunits of F1 ATP synthase"/>
    <property type="match status" value="1"/>
</dbReference>
<dbReference type="SUPFAM" id="SSF52540">
    <property type="entry name" value="P-loop containing nucleoside triphosphate hydrolases"/>
    <property type="match status" value="1"/>
</dbReference>
<dbReference type="PROSITE" id="PS00152">
    <property type="entry name" value="ATPASE_ALPHA_BETA"/>
    <property type="match status" value="1"/>
</dbReference>
<sequence>MRLNSTEISKLIKERIAQFEVFNQSYNEGSIISVSDGIIKINGLSNVMLGEMILLPNNEYAIALNIERDTVGAVVMGPYIHISEGAKVRCTGKILEVPVGDNFLGRVVNALGFPIDGKDSIQNDGFFPVEADAPGVIDRKSVNQPIQTGYKVIDSMIPIGRGQRELIIGDRQTGKTALAIDTIINQKQSGIKCIYVAIGQKLSTIINVVKKLEENNALFNTIIVVASASEAASLQYLAPYSGCAMAEFFRNKGEDSLIIYDDLSKHAVAYRQISLLLRRPPGREAFPGDIFYLHSRLLERASRVSMEYVQKITKNKITGKTGSITALPIIETQSGDVSAFVPTNVISITDGQIFLESNLFNSGIRPAVNPGISVSRVGSAAQTTIIKKLSSGIRTALAQYQELAAFSQFSSDLDDTTRKQLNHGQKITELLKQKQYSPISIAEQALILFVAENNFLDDISIDKITKFEKEILIYAHNYYFDLMEEINKTGDFNIVIKDKFIKLITEFKKNQF</sequence>
<evidence type="ECO:0000255" key="1">
    <source>
        <dbReference type="HAMAP-Rule" id="MF_01346"/>
    </source>
</evidence>
<name>ATPA_BUCAI</name>